<evidence type="ECO:0000255" key="1">
    <source>
        <dbReference type="HAMAP-Rule" id="MF_01389"/>
    </source>
</evidence>
<reference key="1">
    <citation type="journal article" date="2007" name="PLoS Genet.">
        <title>Patterns and implications of gene gain and loss in the evolution of Prochlorococcus.</title>
        <authorList>
            <person name="Kettler G.C."/>
            <person name="Martiny A.C."/>
            <person name="Huang K."/>
            <person name="Zucker J."/>
            <person name="Coleman M.L."/>
            <person name="Rodrigue S."/>
            <person name="Chen F."/>
            <person name="Lapidus A."/>
            <person name="Ferriera S."/>
            <person name="Johnson J."/>
            <person name="Steglich C."/>
            <person name="Church G.M."/>
            <person name="Richardson P."/>
            <person name="Chisholm S.W."/>
        </authorList>
    </citation>
    <scope>NUCLEOTIDE SEQUENCE [LARGE SCALE GENOMIC DNA]</scope>
    <source>
        <strain>MIT 9301</strain>
    </source>
</reference>
<protein>
    <recommendedName>
        <fullName evidence="1">Urease accessory protein UreG</fullName>
    </recommendedName>
</protein>
<organism>
    <name type="scientific">Prochlorococcus marinus (strain MIT 9301)</name>
    <dbReference type="NCBI Taxonomy" id="167546"/>
    <lineage>
        <taxon>Bacteria</taxon>
        <taxon>Bacillati</taxon>
        <taxon>Cyanobacteriota</taxon>
        <taxon>Cyanophyceae</taxon>
        <taxon>Synechococcales</taxon>
        <taxon>Prochlorococcaceae</taxon>
        <taxon>Prochlorococcus</taxon>
    </lineage>
</organism>
<name>UREG_PROM0</name>
<sequence length="203" mass="22130">MSSKLRVGVAGPVGSGKTALVETLCLSLKKNYEIAIVTNDIFTKEDANFLINKKVLEEGRIIGVETGGCPHTAIREDCSLNKNAVLDLENKYNPLDFVFVESGGDNLASSFSPELVDLSIYVIDVSAGDKIPRKGGPGITRSDLLLINKIDLADKVGADLNIMKSDTEFMRKGKPWFFTNLSIGIGVEEITQFLESHIPNNRN</sequence>
<feature type="chain" id="PRO_0000347417" description="Urease accessory protein UreG">
    <location>
        <begin position="1"/>
        <end position="203"/>
    </location>
</feature>
<feature type="binding site" evidence="1">
    <location>
        <begin position="11"/>
        <end position="18"/>
    </location>
    <ligand>
        <name>GTP</name>
        <dbReference type="ChEBI" id="CHEBI:37565"/>
    </ligand>
</feature>
<gene>
    <name evidence="1" type="primary">ureG</name>
    <name type="ordered locus">P9301_08871</name>
</gene>
<keyword id="KW-0143">Chaperone</keyword>
<keyword id="KW-0963">Cytoplasm</keyword>
<keyword id="KW-0342">GTP-binding</keyword>
<keyword id="KW-0996">Nickel insertion</keyword>
<keyword id="KW-0547">Nucleotide-binding</keyword>
<keyword id="KW-1185">Reference proteome</keyword>
<proteinExistence type="inferred from homology"/>
<comment type="function">
    <text evidence="1">Facilitates the functional incorporation of the urease nickel metallocenter. This process requires GTP hydrolysis, probably effectuated by UreG.</text>
</comment>
<comment type="subunit">
    <text evidence="1">Homodimer. UreD, UreF and UreG form a complex that acts as a GTP-hydrolysis-dependent molecular chaperone, activating the urease apoprotein by helping to assemble the nickel containing metallocenter of UreC. The UreE protein probably delivers the nickel.</text>
</comment>
<comment type="subcellular location">
    <subcellularLocation>
        <location evidence="1">Cytoplasm</location>
    </subcellularLocation>
</comment>
<comment type="similarity">
    <text evidence="1">Belongs to the SIMIBI class G3E GTPase family. UreG subfamily.</text>
</comment>
<dbReference type="EMBL" id="CP000576">
    <property type="protein sequence ID" value="ABO17510.1"/>
    <property type="molecule type" value="Genomic_DNA"/>
</dbReference>
<dbReference type="RefSeq" id="WP_011862859.1">
    <property type="nucleotide sequence ID" value="NC_009091.1"/>
</dbReference>
<dbReference type="SMR" id="A3PCN5"/>
<dbReference type="STRING" id="167546.P9301_08871"/>
<dbReference type="KEGG" id="pmg:P9301_08871"/>
<dbReference type="eggNOG" id="COG0378">
    <property type="taxonomic scope" value="Bacteria"/>
</dbReference>
<dbReference type="HOGENOM" id="CLU_072144_1_0_3"/>
<dbReference type="OrthoDB" id="9802035at2"/>
<dbReference type="Proteomes" id="UP000001430">
    <property type="component" value="Chromosome"/>
</dbReference>
<dbReference type="GO" id="GO:0005737">
    <property type="term" value="C:cytoplasm"/>
    <property type="evidence" value="ECO:0007669"/>
    <property type="project" value="UniProtKB-SubCell"/>
</dbReference>
<dbReference type="GO" id="GO:0005525">
    <property type="term" value="F:GTP binding"/>
    <property type="evidence" value="ECO:0007669"/>
    <property type="project" value="UniProtKB-KW"/>
</dbReference>
<dbReference type="GO" id="GO:0003924">
    <property type="term" value="F:GTPase activity"/>
    <property type="evidence" value="ECO:0007669"/>
    <property type="project" value="InterPro"/>
</dbReference>
<dbReference type="GO" id="GO:0016151">
    <property type="term" value="F:nickel cation binding"/>
    <property type="evidence" value="ECO:0007669"/>
    <property type="project" value="UniProtKB-UniRule"/>
</dbReference>
<dbReference type="GO" id="GO:0043419">
    <property type="term" value="P:urea catabolic process"/>
    <property type="evidence" value="ECO:0007669"/>
    <property type="project" value="InterPro"/>
</dbReference>
<dbReference type="CDD" id="cd05540">
    <property type="entry name" value="UreG"/>
    <property type="match status" value="1"/>
</dbReference>
<dbReference type="Gene3D" id="3.40.50.300">
    <property type="entry name" value="P-loop containing nucleotide triphosphate hydrolases"/>
    <property type="match status" value="1"/>
</dbReference>
<dbReference type="HAMAP" id="MF_01389">
    <property type="entry name" value="UreG"/>
    <property type="match status" value="1"/>
</dbReference>
<dbReference type="InterPro" id="IPR003495">
    <property type="entry name" value="CobW/HypB/UreG_nucleotide-bd"/>
</dbReference>
<dbReference type="InterPro" id="IPR027417">
    <property type="entry name" value="P-loop_NTPase"/>
</dbReference>
<dbReference type="InterPro" id="IPR004400">
    <property type="entry name" value="UreG"/>
</dbReference>
<dbReference type="NCBIfam" id="TIGR00101">
    <property type="entry name" value="ureG"/>
    <property type="match status" value="1"/>
</dbReference>
<dbReference type="PANTHER" id="PTHR31715">
    <property type="entry name" value="UREASE ACCESSORY PROTEIN G"/>
    <property type="match status" value="1"/>
</dbReference>
<dbReference type="PANTHER" id="PTHR31715:SF0">
    <property type="entry name" value="UREASE ACCESSORY PROTEIN G"/>
    <property type="match status" value="1"/>
</dbReference>
<dbReference type="Pfam" id="PF02492">
    <property type="entry name" value="cobW"/>
    <property type="match status" value="1"/>
</dbReference>
<dbReference type="PIRSF" id="PIRSF005624">
    <property type="entry name" value="Ni-bind_GTPase"/>
    <property type="match status" value="1"/>
</dbReference>
<dbReference type="SUPFAM" id="SSF52540">
    <property type="entry name" value="P-loop containing nucleoside triphosphate hydrolases"/>
    <property type="match status" value="1"/>
</dbReference>
<accession>A3PCN5</accession>